<accession>Q2Y5S2</accession>
<reference key="1">
    <citation type="submission" date="2005-08" db="EMBL/GenBank/DDBJ databases">
        <title>Complete sequence of chromosome 1 of Nitrosospira multiformis ATCC 25196.</title>
        <authorList>
            <person name="Copeland A."/>
            <person name="Lucas S."/>
            <person name="Lapidus A."/>
            <person name="Barry K."/>
            <person name="Detter J.C."/>
            <person name="Glavina T."/>
            <person name="Hammon N."/>
            <person name="Israni S."/>
            <person name="Pitluck S."/>
            <person name="Chain P."/>
            <person name="Malfatti S."/>
            <person name="Shin M."/>
            <person name="Vergez L."/>
            <person name="Schmutz J."/>
            <person name="Larimer F."/>
            <person name="Land M."/>
            <person name="Hauser L."/>
            <person name="Kyrpides N."/>
            <person name="Lykidis A."/>
            <person name="Richardson P."/>
        </authorList>
    </citation>
    <scope>NUCLEOTIDE SEQUENCE [LARGE SCALE GENOMIC DNA]</scope>
    <source>
        <strain>ATCC 25196 / NCIMB 11849 / C 71</strain>
    </source>
</reference>
<proteinExistence type="inferred from homology"/>
<evidence type="ECO:0000255" key="1">
    <source>
        <dbReference type="HAMAP-Rule" id="MF_01632"/>
    </source>
</evidence>
<protein>
    <recommendedName>
        <fullName evidence="1">Probable chorismate pyruvate-lyase</fullName>
        <shortName evidence="1">CL</shortName>
        <shortName evidence="1">CPL</shortName>
        <ecNumber evidence="1">4.1.3.40</ecNumber>
    </recommendedName>
</protein>
<name>UBIC_NITMU</name>
<gene>
    <name evidence="1" type="primary">ubiC</name>
    <name type="ordered locus">Nmul_A2612</name>
</gene>
<organism>
    <name type="scientific">Nitrosospira multiformis (strain ATCC 25196 / NCIMB 11849 / C 71)</name>
    <dbReference type="NCBI Taxonomy" id="323848"/>
    <lineage>
        <taxon>Bacteria</taxon>
        <taxon>Pseudomonadati</taxon>
        <taxon>Pseudomonadota</taxon>
        <taxon>Betaproteobacteria</taxon>
        <taxon>Nitrosomonadales</taxon>
        <taxon>Nitrosomonadaceae</taxon>
        <taxon>Nitrosospira</taxon>
    </lineage>
</organism>
<keyword id="KW-0963">Cytoplasm</keyword>
<keyword id="KW-0456">Lyase</keyword>
<keyword id="KW-0670">Pyruvate</keyword>
<keyword id="KW-1185">Reference proteome</keyword>
<keyword id="KW-0831">Ubiquinone biosynthesis</keyword>
<feature type="chain" id="PRO_0000255910" description="Probable chorismate pyruvate-lyase">
    <location>
        <begin position="1"/>
        <end position="180"/>
    </location>
</feature>
<feature type="binding site" evidence="1">
    <location>
        <position position="73"/>
    </location>
    <ligand>
        <name>substrate</name>
    </ligand>
</feature>
<feature type="binding site" evidence="1">
    <location>
        <position position="111"/>
    </location>
    <ligand>
        <name>substrate</name>
    </ligand>
</feature>
<feature type="binding site" evidence="1">
    <location>
        <position position="170"/>
    </location>
    <ligand>
        <name>substrate</name>
    </ligand>
</feature>
<sequence>MNAAQLSDWHPAPSSISPRARGWLQNRGSLTQLIQRRCCSEFSVKPVFQSLATVCDDELAVMNLRRDELALVREVYLYCGETPVVFAHSVVARKHLRGAWRSLIGLGNKSLGTVLFTNPVVKRTPLRFKKLTAAHPLFSRACRKLRVQPGNLWARRSLFTLHGQSILVTEVFLPSILELA</sequence>
<comment type="function">
    <text evidence="1">Removes the pyruvyl group from chorismate, with concomitant aromatization of the ring, to provide 4-hydroxybenzoate (4HB) for the ubiquinone pathway.</text>
</comment>
<comment type="catalytic activity">
    <reaction evidence="1">
        <text>chorismate = 4-hydroxybenzoate + pyruvate</text>
        <dbReference type="Rhea" id="RHEA:16505"/>
        <dbReference type="ChEBI" id="CHEBI:15361"/>
        <dbReference type="ChEBI" id="CHEBI:17879"/>
        <dbReference type="ChEBI" id="CHEBI:29748"/>
        <dbReference type="EC" id="4.1.3.40"/>
    </reaction>
</comment>
<comment type="pathway">
    <text evidence="1">Cofactor biosynthesis; ubiquinone biosynthesis.</text>
</comment>
<comment type="subcellular location">
    <subcellularLocation>
        <location evidence="1">Cytoplasm</location>
    </subcellularLocation>
</comment>
<comment type="similarity">
    <text evidence="1">Belongs to the UbiC family.</text>
</comment>
<dbReference type="EC" id="4.1.3.40" evidence="1"/>
<dbReference type="EMBL" id="CP000103">
    <property type="protein sequence ID" value="ABB75899.1"/>
    <property type="molecule type" value="Genomic_DNA"/>
</dbReference>
<dbReference type="RefSeq" id="WP_011381896.1">
    <property type="nucleotide sequence ID" value="NC_007614.1"/>
</dbReference>
<dbReference type="SMR" id="Q2Y5S2"/>
<dbReference type="STRING" id="323848.Nmul_A2612"/>
<dbReference type="KEGG" id="nmu:Nmul_A2612"/>
<dbReference type="eggNOG" id="COG3161">
    <property type="taxonomic scope" value="Bacteria"/>
</dbReference>
<dbReference type="HOGENOM" id="CLU_096824_2_0_4"/>
<dbReference type="OrthoDB" id="8606430at2"/>
<dbReference type="UniPathway" id="UPA00232"/>
<dbReference type="Proteomes" id="UP000002718">
    <property type="component" value="Chromosome"/>
</dbReference>
<dbReference type="GO" id="GO:0005829">
    <property type="term" value="C:cytosol"/>
    <property type="evidence" value="ECO:0007669"/>
    <property type="project" value="TreeGrafter"/>
</dbReference>
<dbReference type="GO" id="GO:0008813">
    <property type="term" value="F:chorismate lyase activity"/>
    <property type="evidence" value="ECO:0007669"/>
    <property type="project" value="UniProtKB-UniRule"/>
</dbReference>
<dbReference type="GO" id="GO:0042866">
    <property type="term" value="P:pyruvate biosynthetic process"/>
    <property type="evidence" value="ECO:0007669"/>
    <property type="project" value="UniProtKB-UniRule"/>
</dbReference>
<dbReference type="GO" id="GO:0006744">
    <property type="term" value="P:ubiquinone biosynthetic process"/>
    <property type="evidence" value="ECO:0007669"/>
    <property type="project" value="UniProtKB-UniRule"/>
</dbReference>
<dbReference type="Gene3D" id="3.40.1410.10">
    <property type="entry name" value="Chorismate lyase-like"/>
    <property type="match status" value="1"/>
</dbReference>
<dbReference type="HAMAP" id="MF_01632">
    <property type="entry name" value="UbiC"/>
    <property type="match status" value="1"/>
</dbReference>
<dbReference type="InterPro" id="IPR007440">
    <property type="entry name" value="Chorismate--pyruvate_lyase"/>
</dbReference>
<dbReference type="InterPro" id="IPR028978">
    <property type="entry name" value="Chorismate_lyase_/UTRA_dom_sf"/>
</dbReference>
<dbReference type="PANTHER" id="PTHR38683">
    <property type="entry name" value="CHORISMATE PYRUVATE-LYASE"/>
    <property type="match status" value="1"/>
</dbReference>
<dbReference type="PANTHER" id="PTHR38683:SF1">
    <property type="entry name" value="CHORISMATE PYRUVATE-LYASE"/>
    <property type="match status" value="1"/>
</dbReference>
<dbReference type="Pfam" id="PF04345">
    <property type="entry name" value="Chor_lyase"/>
    <property type="match status" value="1"/>
</dbReference>
<dbReference type="SUPFAM" id="SSF64288">
    <property type="entry name" value="Chorismate lyase-like"/>
    <property type="match status" value="1"/>
</dbReference>